<gene>
    <name evidence="1" type="primary">matK</name>
</gene>
<sequence length="505" mass="60295">MDKLQRDGKEDTPRQRRFLYPLLFQEDLYAIAYDHYFNRSSSFEPMENSSSNDRFSFLTVKRLISRIRQQNGSIVPFVNCDQTQLVGHNRSFYSELVLGGLTAVPEVPFSIRSKHSLERMNEWTSFRSIHSIFPLMEDKIPHSNFILDIRIPHLTHPEILVRTFRRWIQDAPSLHSLRSVLHEHRNLIISSNLDQLILIASKENTRLSLFLWNYYAYECESLLVPLWKRFSYSRSLPYESFIERTPFYRKIEHIVIFYHKYLKKSLWFLKDPSIHYVKHRERSIIALRGTYLLAKKWRYHITNFWQCHFHLWPQPYRIYIDELSNNWFSFLGYLLSVKMKTSVVRIKMLDDSFITDLITKKFDPIAPTTLLIGSLAKEKFCDISGHPISRLAWTGLTDDDILDRFDQIWRNIFHYHSGSSKKDGLYRIKYILRLPCAKTLACKHKSAIRVVRERFGSELFTKSSPKERESIFLSFSKTRSQRERIWHSDIIQRNPLINSCRKKHN</sequence>
<reference key="1">
    <citation type="submission" date="2000-06" db="EMBL/GenBank/DDBJ databases">
        <title>Chloroplast matK sequence data reconfirm the monophyly of extant gymnosperms and the coniferophytic origin of Gnetales.</title>
        <authorList>
            <person name="Chaw S.-M."/>
            <person name="Hu S.-H."/>
        </authorList>
    </citation>
    <scope>NUCLEOTIDE SEQUENCE [GENOMIC DNA]</scope>
</reference>
<feature type="chain" id="PRO_0000143359" description="Maturase K">
    <location>
        <begin position="1"/>
        <end position="505"/>
    </location>
</feature>
<comment type="function">
    <text evidence="1">Usually encoded in the trnK tRNA gene intron. Probably assists in splicing its own and other chloroplast group II introns.</text>
</comment>
<comment type="subcellular location">
    <subcellularLocation>
        <location>Plastid</location>
        <location>Chloroplast</location>
    </subcellularLocation>
</comment>
<comment type="similarity">
    <text evidence="1">Belongs to the intron maturase 2 family. MatK subfamily.</text>
</comment>
<organism>
    <name type="scientific">Dioon edule</name>
    <name type="common">Virgin's palm</name>
    <dbReference type="NCBI Taxonomy" id="58033"/>
    <lineage>
        <taxon>Eukaryota</taxon>
        <taxon>Viridiplantae</taxon>
        <taxon>Streptophyta</taxon>
        <taxon>Embryophyta</taxon>
        <taxon>Tracheophyta</taxon>
        <taxon>Spermatophyta</taxon>
        <taxon>Cycadidae</taxon>
        <taxon>Cycadales</taxon>
        <taxon>Zamiaceae</taxon>
        <taxon>Dioon</taxon>
    </lineage>
</organism>
<dbReference type="EMBL" id="AF279796">
    <property type="protein sequence ID" value="AAK69119.1"/>
    <property type="molecule type" value="Genomic_DNA"/>
</dbReference>
<dbReference type="GO" id="GO:0009507">
    <property type="term" value="C:chloroplast"/>
    <property type="evidence" value="ECO:0007669"/>
    <property type="project" value="UniProtKB-SubCell"/>
</dbReference>
<dbReference type="GO" id="GO:0003723">
    <property type="term" value="F:RNA binding"/>
    <property type="evidence" value="ECO:0007669"/>
    <property type="project" value="UniProtKB-KW"/>
</dbReference>
<dbReference type="GO" id="GO:0006397">
    <property type="term" value="P:mRNA processing"/>
    <property type="evidence" value="ECO:0007669"/>
    <property type="project" value="UniProtKB-KW"/>
</dbReference>
<dbReference type="GO" id="GO:0008380">
    <property type="term" value="P:RNA splicing"/>
    <property type="evidence" value="ECO:0007669"/>
    <property type="project" value="UniProtKB-UniRule"/>
</dbReference>
<dbReference type="GO" id="GO:0008033">
    <property type="term" value="P:tRNA processing"/>
    <property type="evidence" value="ECO:0007669"/>
    <property type="project" value="UniProtKB-KW"/>
</dbReference>
<dbReference type="HAMAP" id="MF_01390">
    <property type="entry name" value="MatK"/>
    <property type="match status" value="1"/>
</dbReference>
<dbReference type="InterPro" id="IPR024937">
    <property type="entry name" value="Domain_X"/>
</dbReference>
<dbReference type="InterPro" id="IPR002866">
    <property type="entry name" value="Maturase_MatK"/>
</dbReference>
<dbReference type="InterPro" id="IPR024942">
    <property type="entry name" value="Maturase_MatK_N"/>
</dbReference>
<dbReference type="PANTHER" id="PTHR34811">
    <property type="entry name" value="MATURASE K"/>
    <property type="match status" value="1"/>
</dbReference>
<dbReference type="PANTHER" id="PTHR34811:SF1">
    <property type="entry name" value="MATURASE K"/>
    <property type="match status" value="1"/>
</dbReference>
<dbReference type="Pfam" id="PF01348">
    <property type="entry name" value="Intron_maturas2"/>
    <property type="match status" value="1"/>
</dbReference>
<dbReference type="Pfam" id="PF01824">
    <property type="entry name" value="MatK_N"/>
    <property type="match status" value="1"/>
</dbReference>
<geneLocation type="chloroplast"/>
<name>MATK_DIOED</name>
<proteinExistence type="inferred from homology"/>
<accession>Q8MEY2</accession>
<protein>
    <recommendedName>
        <fullName evidence="1">Maturase K</fullName>
    </recommendedName>
    <alternativeName>
        <fullName evidence="1">Intron maturase</fullName>
    </alternativeName>
</protein>
<evidence type="ECO:0000255" key="1">
    <source>
        <dbReference type="HAMAP-Rule" id="MF_01390"/>
    </source>
</evidence>
<keyword id="KW-0150">Chloroplast</keyword>
<keyword id="KW-0507">mRNA processing</keyword>
<keyword id="KW-0934">Plastid</keyword>
<keyword id="KW-0694">RNA-binding</keyword>
<keyword id="KW-0819">tRNA processing</keyword>